<feature type="chain" id="PRO_0000255104" description="Cytochrome b">
    <location>
        <begin position="1"/>
        <end position="381"/>
    </location>
</feature>
<feature type="transmembrane region" description="Helical" evidence="2">
    <location>
        <begin position="33"/>
        <end position="53"/>
    </location>
</feature>
<feature type="transmembrane region" description="Helical" evidence="2">
    <location>
        <begin position="77"/>
        <end position="98"/>
    </location>
</feature>
<feature type="transmembrane region" description="Helical" evidence="2">
    <location>
        <begin position="113"/>
        <end position="133"/>
    </location>
</feature>
<feature type="transmembrane region" description="Helical" evidence="2">
    <location>
        <begin position="178"/>
        <end position="198"/>
    </location>
</feature>
<feature type="transmembrane region" description="Helical" evidence="2">
    <location>
        <begin position="226"/>
        <end position="246"/>
    </location>
</feature>
<feature type="transmembrane region" description="Helical" evidence="2">
    <location>
        <begin position="288"/>
        <end position="308"/>
    </location>
</feature>
<feature type="transmembrane region" description="Helical" evidence="2">
    <location>
        <begin position="320"/>
        <end position="340"/>
    </location>
</feature>
<feature type="transmembrane region" description="Helical" evidence="2">
    <location>
        <begin position="347"/>
        <end position="367"/>
    </location>
</feature>
<feature type="binding site" description="axial binding residue" evidence="2">
    <location>
        <position position="83"/>
    </location>
    <ligand>
        <name>heme b</name>
        <dbReference type="ChEBI" id="CHEBI:60344"/>
        <label>b562</label>
    </ligand>
    <ligandPart>
        <name>Fe</name>
        <dbReference type="ChEBI" id="CHEBI:18248"/>
    </ligandPart>
</feature>
<feature type="binding site" description="axial binding residue" evidence="2">
    <location>
        <position position="97"/>
    </location>
    <ligand>
        <name>heme b</name>
        <dbReference type="ChEBI" id="CHEBI:60344"/>
        <label>b566</label>
    </ligand>
    <ligandPart>
        <name>Fe</name>
        <dbReference type="ChEBI" id="CHEBI:18248"/>
    </ligandPart>
</feature>
<feature type="binding site" description="axial binding residue" evidence="2">
    <location>
        <position position="182"/>
    </location>
    <ligand>
        <name>heme b</name>
        <dbReference type="ChEBI" id="CHEBI:60344"/>
        <label>b562</label>
    </ligand>
    <ligandPart>
        <name>Fe</name>
        <dbReference type="ChEBI" id="CHEBI:18248"/>
    </ligandPart>
</feature>
<feature type="binding site" description="axial binding residue" evidence="2">
    <location>
        <position position="196"/>
    </location>
    <ligand>
        <name>heme b</name>
        <dbReference type="ChEBI" id="CHEBI:60344"/>
        <label>b566</label>
    </ligand>
    <ligandPart>
        <name>Fe</name>
        <dbReference type="ChEBI" id="CHEBI:18248"/>
    </ligandPart>
</feature>
<feature type="binding site" evidence="2">
    <location>
        <position position="201"/>
    </location>
    <ligand>
        <name>a ubiquinone</name>
        <dbReference type="ChEBI" id="CHEBI:16389"/>
    </ligand>
</feature>
<protein>
    <recommendedName>
        <fullName>Cytochrome b</fullName>
    </recommendedName>
    <alternativeName>
        <fullName>Complex III subunit 3</fullName>
    </alternativeName>
    <alternativeName>
        <fullName>Complex III subunit III</fullName>
    </alternativeName>
    <alternativeName>
        <fullName>Cytochrome b-c1 complex subunit 3</fullName>
    </alternativeName>
    <alternativeName>
        <fullName>Ubiquinol-cytochrome-c reductase complex cytochrome b subunit</fullName>
    </alternativeName>
</protein>
<geneLocation type="mitochondrion"/>
<organism>
    <name type="scientific">Oecomys bicolor</name>
    <name type="common">Bicolored arboreal rice rat</name>
    <dbReference type="NCBI Taxonomy" id="48011"/>
    <lineage>
        <taxon>Eukaryota</taxon>
        <taxon>Metazoa</taxon>
        <taxon>Chordata</taxon>
        <taxon>Craniata</taxon>
        <taxon>Vertebrata</taxon>
        <taxon>Euteleostomi</taxon>
        <taxon>Mammalia</taxon>
        <taxon>Eutheria</taxon>
        <taxon>Euarchontoglires</taxon>
        <taxon>Glires</taxon>
        <taxon>Rodentia</taxon>
        <taxon>Myomorpha</taxon>
        <taxon>Muroidea</taxon>
        <taxon>Cricetidae</taxon>
        <taxon>Sigmodontinae</taxon>
        <taxon>Oecomys</taxon>
    </lineage>
</organism>
<reference key="1">
    <citation type="journal article" date="1999" name="J. Mammal. Evol.">
        <title>Phylogenetic relationships and the radiation of Sigmodontine rodents in South America: evidence from cytochrome b.</title>
        <authorList>
            <person name="Smith M.F."/>
            <person name="Patton J.L."/>
        </authorList>
    </citation>
    <scope>NUCLEOTIDE SEQUENCE [GENOMIC DNA]</scope>
</reference>
<accession>Q9TFX4</accession>
<sequence length="381" mass="42816">MTIMRKTHPLIKIINHSFIDLPTPSNISSWWNFGSLLGICLMVQITTGLFLAMHYTSDTATAFSSVTHICRDVNYGWLIRYLHANGASMFFICLFIHVGRGIYYGSYMLNETWNIGIILLLTTMATAFVGYVLPWGQMSFWGATVITNLLSAIPYIGTTLVEWIWGGFSVDKATLTRFFAFHFILPFIITAMVLVHLLFLHETGSNNPSGLNSDSDKIPFHPYYTFKDLLGILLLLMVLMILVLFFPDVLGDPDNYTPANPLNTPAHIXPXXYFLFAYAILRSIPNKLGGVLALLLSILILAAFPLLNSSKQHGLTYRPLTQIIYWIFIANLLILTWIGGQPVEYPFTTIGQIASISYFTIIIILMPIASMIENNILKLHA</sequence>
<name>CYB_OECBI</name>
<dbReference type="EMBL" id="AF108699">
    <property type="protein sequence ID" value="AAD45481.1"/>
    <property type="molecule type" value="Genomic_DNA"/>
</dbReference>
<dbReference type="GO" id="GO:0005743">
    <property type="term" value="C:mitochondrial inner membrane"/>
    <property type="evidence" value="ECO:0007669"/>
    <property type="project" value="UniProtKB-SubCell"/>
</dbReference>
<dbReference type="GO" id="GO:0045275">
    <property type="term" value="C:respiratory chain complex III"/>
    <property type="evidence" value="ECO:0007669"/>
    <property type="project" value="InterPro"/>
</dbReference>
<dbReference type="GO" id="GO:0046872">
    <property type="term" value="F:metal ion binding"/>
    <property type="evidence" value="ECO:0007669"/>
    <property type="project" value="UniProtKB-KW"/>
</dbReference>
<dbReference type="GO" id="GO:0008121">
    <property type="term" value="F:ubiquinol-cytochrome-c reductase activity"/>
    <property type="evidence" value="ECO:0007669"/>
    <property type="project" value="InterPro"/>
</dbReference>
<dbReference type="GO" id="GO:0006122">
    <property type="term" value="P:mitochondrial electron transport, ubiquinol to cytochrome c"/>
    <property type="evidence" value="ECO:0007669"/>
    <property type="project" value="TreeGrafter"/>
</dbReference>
<dbReference type="CDD" id="cd00290">
    <property type="entry name" value="cytochrome_b_C"/>
    <property type="match status" value="1"/>
</dbReference>
<dbReference type="CDD" id="cd00284">
    <property type="entry name" value="Cytochrome_b_N"/>
    <property type="match status" value="1"/>
</dbReference>
<dbReference type="FunFam" id="1.20.810.10:FF:000002">
    <property type="entry name" value="Cytochrome b"/>
    <property type="match status" value="1"/>
</dbReference>
<dbReference type="Gene3D" id="1.20.810.10">
    <property type="entry name" value="Cytochrome Bc1 Complex, Chain C"/>
    <property type="match status" value="1"/>
</dbReference>
<dbReference type="InterPro" id="IPR005798">
    <property type="entry name" value="Cyt_b/b6_C"/>
</dbReference>
<dbReference type="InterPro" id="IPR036150">
    <property type="entry name" value="Cyt_b/b6_C_sf"/>
</dbReference>
<dbReference type="InterPro" id="IPR005797">
    <property type="entry name" value="Cyt_b/b6_N"/>
</dbReference>
<dbReference type="InterPro" id="IPR027387">
    <property type="entry name" value="Cytb/b6-like_sf"/>
</dbReference>
<dbReference type="InterPro" id="IPR030689">
    <property type="entry name" value="Cytochrome_b"/>
</dbReference>
<dbReference type="InterPro" id="IPR048260">
    <property type="entry name" value="Cytochrome_b_C_euk/bac"/>
</dbReference>
<dbReference type="InterPro" id="IPR048259">
    <property type="entry name" value="Cytochrome_b_N_euk/bac"/>
</dbReference>
<dbReference type="InterPro" id="IPR016174">
    <property type="entry name" value="Di-haem_cyt_TM"/>
</dbReference>
<dbReference type="PANTHER" id="PTHR19271">
    <property type="entry name" value="CYTOCHROME B"/>
    <property type="match status" value="1"/>
</dbReference>
<dbReference type="PANTHER" id="PTHR19271:SF16">
    <property type="entry name" value="CYTOCHROME B"/>
    <property type="match status" value="1"/>
</dbReference>
<dbReference type="Pfam" id="PF00032">
    <property type="entry name" value="Cytochrom_B_C"/>
    <property type="match status" value="1"/>
</dbReference>
<dbReference type="Pfam" id="PF00033">
    <property type="entry name" value="Cytochrome_B"/>
    <property type="match status" value="1"/>
</dbReference>
<dbReference type="PIRSF" id="PIRSF038885">
    <property type="entry name" value="COB"/>
    <property type="match status" value="1"/>
</dbReference>
<dbReference type="SUPFAM" id="SSF81648">
    <property type="entry name" value="a domain/subunit of cytochrome bc1 complex (Ubiquinol-cytochrome c reductase)"/>
    <property type="match status" value="1"/>
</dbReference>
<dbReference type="SUPFAM" id="SSF81342">
    <property type="entry name" value="Transmembrane di-heme cytochromes"/>
    <property type="match status" value="1"/>
</dbReference>
<dbReference type="PROSITE" id="PS51003">
    <property type="entry name" value="CYTB_CTER"/>
    <property type="match status" value="1"/>
</dbReference>
<dbReference type="PROSITE" id="PS51002">
    <property type="entry name" value="CYTB_NTER"/>
    <property type="match status" value="1"/>
</dbReference>
<keyword id="KW-0249">Electron transport</keyword>
<keyword id="KW-0349">Heme</keyword>
<keyword id="KW-0408">Iron</keyword>
<keyword id="KW-0472">Membrane</keyword>
<keyword id="KW-0479">Metal-binding</keyword>
<keyword id="KW-0496">Mitochondrion</keyword>
<keyword id="KW-0999">Mitochondrion inner membrane</keyword>
<keyword id="KW-0679">Respiratory chain</keyword>
<keyword id="KW-0812">Transmembrane</keyword>
<keyword id="KW-1133">Transmembrane helix</keyword>
<keyword id="KW-0813">Transport</keyword>
<keyword id="KW-0830">Ubiquinone</keyword>
<gene>
    <name type="primary">MT-CYB</name>
    <name type="synonym">COB</name>
    <name type="synonym">CYTB</name>
    <name type="synonym">MTCYB</name>
</gene>
<comment type="function">
    <text evidence="2">Component of the ubiquinol-cytochrome c reductase complex (complex III or cytochrome b-c1 complex) that is part of the mitochondrial respiratory chain. The b-c1 complex mediates electron transfer from ubiquinol to cytochrome c. Contributes to the generation of a proton gradient across the mitochondrial membrane that is then used for ATP synthesis.</text>
</comment>
<comment type="cofactor">
    <cofactor evidence="2">
        <name>heme b</name>
        <dbReference type="ChEBI" id="CHEBI:60344"/>
    </cofactor>
    <text evidence="2">Binds 2 heme b groups non-covalently.</text>
</comment>
<comment type="subunit">
    <text evidence="2">The cytochrome bc1 complex contains 11 subunits: 3 respiratory subunits (MT-CYB, CYC1 and UQCRFS1), 2 core proteins (UQCRC1 and UQCRC2) and 6 low-molecular weight proteins (UQCRH/QCR6, UQCRB/QCR7, UQCRQ/QCR8, UQCR10/QCR9, UQCR11/QCR10 and a cleavage product of UQCRFS1). This cytochrome bc1 complex then forms a dimer.</text>
</comment>
<comment type="subcellular location">
    <subcellularLocation>
        <location evidence="2">Mitochondrion inner membrane</location>
        <topology evidence="2">Multi-pass membrane protein</topology>
    </subcellularLocation>
</comment>
<comment type="miscellaneous">
    <text evidence="1">Heme 1 (or BL or b562) is low-potential and absorbs at about 562 nm, and heme 2 (or BH or b566) is high-potential and absorbs at about 566 nm.</text>
</comment>
<comment type="similarity">
    <text evidence="3 4">Belongs to the cytochrome b family.</text>
</comment>
<comment type="caution">
    <text evidence="2">The full-length protein contains only eight transmembrane helices, not nine as predicted by bioinformatics tools.</text>
</comment>
<proteinExistence type="inferred from homology"/>
<evidence type="ECO:0000250" key="1"/>
<evidence type="ECO:0000250" key="2">
    <source>
        <dbReference type="UniProtKB" id="P00157"/>
    </source>
</evidence>
<evidence type="ECO:0000255" key="3">
    <source>
        <dbReference type="PROSITE-ProRule" id="PRU00967"/>
    </source>
</evidence>
<evidence type="ECO:0000255" key="4">
    <source>
        <dbReference type="PROSITE-ProRule" id="PRU00968"/>
    </source>
</evidence>